<name>ENDA_PYRFU</name>
<gene>
    <name evidence="1" type="primary">endA</name>
    <name type="ordered locus">PF0266</name>
</gene>
<evidence type="ECO:0000255" key="1">
    <source>
        <dbReference type="HAMAP-Rule" id="MF_01833"/>
    </source>
</evidence>
<organism>
    <name type="scientific">Pyrococcus furiosus (strain ATCC 43587 / DSM 3638 / JCM 8422 / Vc1)</name>
    <dbReference type="NCBI Taxonomy" id="186497"/>
    <lineage>
        <taxon>Archaea</taxon>
        <taxon>Methanobacteriati</taxon>
        <taxon>Methanobacteriota</taxon>
        <taxon>Thermococci</taxon>
        <taxon>Thermococcales</taxon>
        <taxon>Thermococcaceae</taxon>
        <taxon>Pyrococcus</taxon>
    </lineage>
</organism>
<accession>Q8U429</accession>
<feature type="chain" id="PRO_0000109477" description="tRNA-splicing endonuclease">
    <location>
        <begin position="1"/>
        <end position="170"/>
    </location>
</feature>
<feature type="active site" evidence="1">
    <location>
        <position position="110"/>
    </location>
</feature>
<feature type="active site" evidence="1">
    <location>
        <position position="116"/>
    </location>
</feature>
<feature type="active site" evidence="1">
    <location>
        <position position="147"/>
    </location>
</feature>
<proteinExistence type="inferred from homology"/>
<reference key="1">
    <citation type="journal article" date="1999" name="Genetics">
        <title>Divergence of the hyperthermophilic archaea Pyrococcus furiosus and P. horikoshii inferred from complete genomic sequences.</title>
        <authorList>
            <person name="Maeder D.L."/>
            <person name="Weiss R.B."/>
            <person name="Dunn D.M."/>
            <person name="Cherry J.L."/>
            <person name="Gonzalez J.M."/>
            <person name="DiRuggiero J."/>
            <person name="Robb F.T."/>
        </authorList>
    </citation>
    <scope>NUCLEOTIDE SEQUENCE [LARGE SCALE GENOMIC DNA]</scope>
    <source>
        <strain>ATCC 43587 / DSM 3638 / JCM 8422 / Vc1</strain>
    </source>
</reference>
<comment type="function">
    <text evidence="1">Endonuclease that removes tRNA introns. Cleaves pre-tRNA at the 5'- and 3'-splice sites to release the intron. The products are an intron and two tRNA half-molecules bearing 2',3' cyclic phosphate and 5'-OH termini. Recognizes a pseudosymmetric substrate in which 2 bulged loops of 3 bases are separated by a stem of 4 bp.</text>
</comment>
<comment type="catalytic activity">
    <reaction evidence="1">
        <text>pretRNA = a 3'-half-tRNA molecule with a 5'-OH end + a 5'-half-tRNA molecule with a 2',3'-cyclic phosphate end + an intron with a 2',3'-cyclic phosphate and a 5'-hydroxyl terminus.</text>
        <dbReference type="EC" id="4.6.1.16"/>
    </reaction>
</comment>
<comment type="subunit">
    <text evidence="1">Homotetramer; although the tetramer contains four active sites, only two participate in the cleavage. Therefore, it should be considered as a dimer of dimers.</text>
</comment>
<comment type="similarity">
    <text evidence="1">Belongs to the tRNA-intron endonuclease family. Archaeal short subfamily.</text>
</comment>
<dbReference type="EC" id="4.6.1.16" evidence="1"/>
<dbReference type="EMBL" id="AE009950">
    <property type="protein sequence ID" value="AAL80390.1"/>
    <property type="molecule type" value="Genomic_DNA"/>
</dbReference>
<dbReference type="RefSeq" id="WP_011011381.1">
    <property type="nucleotide sequence ID" value="NZ_CP023154.1"/>
</dbReference>
<dbReference type="SMR" id="Q8U429"/>
<dbReference type="STRING" id="186497.PF0266"/>
<dbReference type="PaxDb" id="186497-PF0266"/>
<dbReference type="GeneID" id="41712056"/>
<dbReference type="KEGG" id="pfu:PF0266"/>
<dbReference type="PATRIC" id="fig|186497.12.peg.278"/>
<dbReference type="eggNOG" id="arCOG01701">
    <property type="taxonomic scope" value="Archaea"/>
</dbReference>
<dbReference type="HOGENOM" id="CLU_114393_0_0_2"/>
<dbReference type="OrthoDB" id="46045at2157"/>
<dbReference type="PhylomeDB" id="Q8U429"/>
<dbReference type="Proteomes" id="UP000001013">
    <property type="component" value="Chromosome"/>
</dbReference>
<dbReference type="GO" id="GO:0016829">
    <property type="term" value="F:lyase activity"/>
    <property type="evidence" value="ECO:0007669"/>
    <property type="project" value="UniProtKB-KW"/>
</dbReference>
<dbReference type="GO" id="GO:0003676">
    <property type="term" value="F:nucleic acid binding"/>
    <property type="evidence" value="ECO:0007669"/>
    <property type="project" value="InterPro"/>
</dbReference>
<dbReference type="GO" id="GO:0000213">
    <property type="term" value="F:tRNA-intron endonuclease activity"/>
    <property type="evidence" value="ECO:0007669"/>
    <property type="project" value="UniProtKB-UniRule"/>
</dbReference>
<dbReference type="GO" id="GO:0000379">
    <property type="term" value="P:tRNA-type intron splice site recognition and cleavage"/>
    <property type="evidence" value="ECO:0007669"/>
    <property type="project" value="TreeGrafter"/>
</dbReference>
<dbReference type="CDD" id="cd22363">
    <property type="entry name" value="tRNA-intron_lyase_C"/>
    <property type="match status" value="1"/>
</dbReference>
<dbReference type="FunFam" id="3.40.1350.10:FF:000006">
    <property type="entry name" value="tRNA-splicing endonuclease"/>
    <property type="match status" value="1"/>
</dbReference>
<dbReference type="Gene3D" id="3.40.1350.10">
    <property type="match status" value="1"/>
</dbReference>
<dbReference type="Gene3D" id="3.40.1170.20">
    <property type="entry name" value="tRNA intron endonuclease, N-terminal domain"/>
    <property type="match status" value="1"/>
</dbReference>
<dbReference type="HAMAP" id="MF_01833">
    <property type="entry name" value="EndA_short"/>
    <property type="match status" value="1"/>
</dbReference>
<dbReference type="InterPro" id="IPR011856">
    <property type="entry name" value="tRNA_endonuc-like_dom_sf"/>
</dbReference>
<dbReference type="InterPro" id="IPR036167">
    <property type="entry name" value="tRNA_intron_Endo_cat-like_sf"/>
</dbReference>
<dbReference type="InterPro" id="IPR006677">
    <property type="entry name" value="tRNA_intron_Endonuc_cat-like"/>
</dbReference>
<dbReference type="InterPro" id="IPR006678">
    <property type="entry name" value="tRNA_intron_Endonuc_N"/>
</dbReference>
<dbReference type="InterPro" id="IPR036740">
    <property type="entry name" value="tRNA_intron_Endonuc_N_sf"/>
</dbReference>
<dbReference type="InterPro" id="IPR006676">
    <property type="entry name" value="tRNA_splic"/>
</dbReference>
<dbReference type="InterPro" id="IPR016442">
    <property type="entry name" value="tRNA_splic_arch_short"/>
</dbReference>
<dbReference type="NCBIfam" id="TIGR00324">
    <property type="entry name" value="endA"/>
    <property type="match status" value="1"/>
</dbReference>
<dbReference type="PANTHER" id="PTHR13070:SF0">
    <property type="entry name" value="TRNA-SPLICING ENDONUCLEASE SUBUNIT SEN34"/>
    <property type="match status" value="1"/>
</dbReference>
<dbReference type="PANTHER" id="PTHR13070">
    <property type="entry name" value="TRNA-SPLICING ENDONUCLEASE SUBUNIT SEN34-RELATED"/>
    <property type="match status" value="1"/>
</dbReference>
<dbReference type="Pfam" id="PF01974">
    <property type="entry name" value="tRNA_int_endo"/>
    <property type="match status" value="1"/>
</dbReference>
<dbReference type="Pfam" id="PF02778">
    <property type="entry name" value="tRNA_int_endo_N"/>
    <property type="match status" value="1"/>
</dbReference>
<dbReference type="PIRSF" id="PIRSF005285">
    <property type="entry name" value="tRNA_splic_archaea"/>
    <property type="match status" value="1"/>
</dbReference>
<dbReference type="SUPFAM" id="SSF53032">
    <property type="entry name" value="tRNA-intron endonuclease catalytic domain-like"/>
    <property type="match status" value="1"/>
</dbReference>
<dbReference type="SUPFAM" id="SSF55267">
    <property type="entry name" value="tRNA-intron endonuclease N-terminal domain-like"/>
    <property type="match status" value="1"/>
</dbReference>
<sequence length="170" mass="19921">MKTVIEFYLSGDRVYSEREKAINQLHINRGYGELKGKRLFLSLIEAAYLLEKGWIKVLDGERELSFYDVVSLGKKKDEDFDVKYLVYKDLRDRGYIVKSALKFGSHYRVYRKGAEHSDWLVWVVRESQKLSPNDITARARVAHGVRKTMVLAVVDEDGDVVYYKVEWTKF</sequence>
<protein>
    <recommendedName>
        <fullName evidence="1">tRNA-splicing endonuclease</fullName>
        <ecNumber evidence="1">4.6.1.16</ecNumber>
    </recommendedName>
    <alternativeName>
        <fullName evidence="1">tRNA-intron endonuclease</fullName>
    </alternativeName>
</protein>
<keyword id="KW-0456">Lyase</keyword>
<keyword id="KW-1185">Reference proteome</keyword>
<keyword id="KW-0819">tRNA processing</keyword>